<accession>B5RBY7</accession>
<comment type="function">
    <text evidence="1">Catalyzes the phosphorylation of the hydroxyl group of 4-methyl-5-beta-hydroxyethylthiazole (THZ).</text>
</comment>
<comment type="catalytic activity">
    <reaction evidence="1">
        <text>5-(2-hydroxyethyl)-4-methylthiazole + ATP = 4-methyl-5-(2-phosphooxyethyl)-thiazole + ADP + H(+)</text>
        <dbReference type="Rhea" id="RHEA:24212"/>
        <dbReference type="ChEBI" id="CHEBI:15378"/>
        <dbReference type="ChEBI" id="CHEBI:17957"/>
        <dbReference type="ChEBI" id="CHEBI:30616"/>
        <dbReference type="ChEBI" id="CHEBI:58296"/>
        <dbReference type="ChEBI" id="CHEBI:456216"/>
        <dbReference type="EC" id="2.7.1.50"/>
    </reaction>
</comment>
<comment type="cofactor">
    <cofactor evidence="1">
        <name>Mg(2+)</name>
        <dbReference type="ChEBI" id="CHEBI:18420"/>
    </cofactor>
</comment>
<comment type="pathway">
    <text evidence="1">Cofactor biosynthesis; thiamine diphosphate biosynthesis; 4-methyl-5-(2-phosphoethyl)-thiazole from 5-(2-hydroxyethyl)-4-methylthiazole: step 1/1.</text>
</comment>
<comment type="similarity">
    <text evidence="1">Belongs to the Thz kinase family.</text>
</comment>
<proteinExistence type="inferred from homology"/>
<gene>
    <name evidence="1" type="primary">thiM</name>
    <name type="ordered locus">SG2180</name>
</gene>
<organism>
    <name type="scientific">Salmonella gallinarum (strain 287/91 / NCTC 13346)</name>
    <dbReference type="NCBI Taxonomy" id="550538"/>
    <lineage>
        <taxon>Bacteria</taxon>
        <taxon>Pseudomonadati</taxon>
        <taxon>Pseudomonadota</taxon>
        <taxon>Gammaproteobacteria</taxon>
        <taxon>Enterobacterales</taxon>
        <taxon>Enterobacteriaceae</taxon>
        <taxon>Salmonella</taxon>
    </lineage>
</organism>
<dbReference type="EC" id="2.7.1.50" evidence="1"/>
<dbReference type="EMBL" id="AM933173">
    <property type="protein sequence ID" value="CAR38018.1"/>
    <property type="molecule type" value="Genomic_DNA"/>
</dbReference>
<dbReference type="RefSeq" id="WP_001182156.1">
    <property type="nucleotide sequence ID" value="NC_011274.1"/>
</dbReference>
<dbReference type="SMR" id="B5RBY7"/>
<dbReference type="KEGG" id="seg:SG2180"/>
<dbReference type="HOGENOM" id="CLU_019943_0_1_6"/>
<dbReference type="UniPathway" id="UPA00060">
    <property type="reaction ID" value="UER00139"/>
</dbReference>
<dbReference type="Proteomes" id="UP000008321">
    <property type="component" value="Chromosome"/>
</dbReference>
<dbReference type="GO" id="GO:0005524">
    <property type="term" value="F:ATP binding"/>
    <property type="evidence" value="ECO:0007669"/>
    <property type="project" value="UniProtKB-UniRule"/>
</dbReference>
<dbReference type="GO" id="GO:0004417">
    <property type="term" value="F:hydroxyethylthiazole kinase activity"/>
    <property type="evidence" value="ECO:0007669"/>
    <property type="project" value="UniProtKB-UniRule"/>
</dbReference>
<dbReference type="GO" id="GO:0000287">
    <property type="term" value="F:magnesium ion binding"/>
    <property type="evidence" value="ECO:0007669"/>
    <property type="project" value="UniProtKB-UniRule"/>
</dbReference>
<dbReference type="GO" id="GO:0009228">
    <property type="term" value="P:thiamine biosynthetic process"/>
    <property type="evidence" value="ECO:0007669"/>
    <property type="project" value="UniProtKB-KW"/>
</dbReference>
<dbReference type="GO" id="GO:0009229">
    <property type="term" value="P:thiamine diphosphate biosynthetic process"/>
    <property type="evidence" value="ECO:0007669"/>
    <property type="project" value="UniProtKB-UniRule"/>
</dbReference>
<dbReference type="CDD" id="cd01170">
    <property type="entry name" value="THZ_kinase"/>
    <property type="match status" value="1"/>
</dbReference>
<dbReference type="FunFam" id="3.40.1190.20:FF:000015">
    <property type="entry name" value="Hydroxyethylthiazole kinase"/>
    <property type="match status" value="1"/>
</dbReference>
<dbReference type="Gene3D" id="3.40.1190.20">
    <property type="match status" value="1"/>
</dbReference>
<dbReference type="HAMAP" id="MF_00228">
    <property type="entry name" value="Thz_kinase"/>
    <property type="match status" value="1"/>
</dbReference>
<dbReference type="InterPro" id="IPR000417">
    <property type="entry name" value="Hyethyz_kinase"/>
</dbReference>
<dbReference type="InterPro" id="IPR029056">
    <property type="entry name" value="Ribokinase-like"/>
</dbReference>
<dbReference type="NCBIfam" id="NF006830">
    <property type="entry name" value="PRK09355.1"/>
    <property type="match status" value="1"/>
</dbReference>
<dbReference type="NCBIfam" id="TIGR00694">
    <property type="entry name" value="thiM"/>
    <property type="match status" value="1"/>
</dbReference>
<dbReference type="Pfam" id="PF02110">
    <property type="entry name" value="HK"/>
    <property type="match status" value="1"/>
</dbReference>
<dbReference type="PIRSF" id="PIRSF000513">
    <property type="entry name" value="Thz_kinase"/>
    <property type="match status" value="1"/>
</dbReference>
<dbReference type="PRINTS" id="PR01099">
    <property type="entry name" value="HYETHTZKNASE"/>
</dbReference>
<dbReference type="SUPFAM" id="SSF53613">
    <property type="entry name" value="Ribokinase-like"/>
    <property type="match status" value="1"/>
</dbReference>
<keyword id="KW-0067">ATP-binding</keyword>
<keyword id="KW-0418">Kinase</keyword>
<keyword id="KW-0460">Magnesium</keyword>
<keyword id="KW-0479">Metal-binding</keyword>
<keyword id="KW-0547">Nucleotide-binding</keyword>
<keyword id="KW-0784">Thiamine biosynthesis</keyword>
<keyword id="KW-0808">Transferase</keyword>
<name>THIM_SALG2</name>
<sequence length="265" mass="27422">MQPDLHCRTLAAHTLKHFRALSPLTHCMTNDVVQTFTANTLLALGASPAMVIDPVEARPFAAIANALLINVGTLTASRADAMRAAVESAYDAKTPWTLDPVAVGALEFRRRFCLDLLSLRPAAIRGNASEILALSGMALGGRGVDTTEAALAALPAAQALARQIDCIVVVTGEIDYVTNGQRTLSIPGGDPLMTRIVGTGCALSAVVAASCALPGAALDNVASACCWMKLAGQAAAERSEGPGSFIPAFLDALYHLDVEAANATN</sequence>
<feature type="chain" id="PRO_1000100421" description="Hydroxyethylthiazole kinase">
    <location>
        <begin position="1"/>
        <end position="265"/>
    </location>
</feature>
<feature type="binding site" evidence="1">
    <location>
        <position position="50"/>
    </location>
    <ligand>
        <name>substrate</name>
    </ligand>
</feature>
<feature type="binding site" evidence="1">
    <location>
        <position position="125"/>
    </location>
    <ligand>
        <name>ATP</name>
        <dbReference type="ChEBI" id="CHEBI:30616"/>
    </ligand>
</feature>
<feature type="binding site" evidence="1">
    <location>
        <position position="171"/>
    </location>
    <ligand>
        <name>ATP</name>
        <dbReference type="ChEBI" id="CHEBI:30616"/>
    </ligand>
</feature>
<feature type="binding site" evidence="1">
    <location>
        <position position="198"/>
    </location>
    <ligand>
        <name>substrate</name>
    </ligand>
</feature>
<protein>
    <recommendedName>
        <fullName evidence="1">Hydroxyethylthiazole kinase</fullName>
        <ecNumber evidence="1">2.7.1.50</ecNumber>
    </recommendedName>
    <alternativeName>
        <fullName evidence="1">4-methyl-5-beta-hydroxyethylthiazole kinase</fullName>
        <shortName evidence="1">TH kinase</shortName>
        <shortName evidence="1">Thz kinase</shortName>
    </alternativeName>
</protein>
<evidence type="ECO:0000255" key="1">
    <source>
        <dbReference type="HAMAP-Rule" id="MF_00228"/>
    </source>
</evidence>
<reference key="1">
    <citation type="journal article" date="2008" name="Genome Res.">
        <title>Comparative genome analysis of Salmonella enteritidis PT4 and Salmonella gallinarum 287/91 provides insights into evolutionary and host adaptation pathways.</title>
        <authorList>
            <person name="Thomson N.R."/>
            <person name="Clayton D.J."/>
            <person name="Windhorst D."/>
            <person name="Vernikos G."/>
            <person name="Davidson S."/>
            <person name="Churcher C."/>
            <person name="Quail M.A."/>
            <person name="Stevens M."/>
            <person name="Jones M.A."/>
            <person name="Watson M."/>
            <person name="Barron A."/>
            <person name="Layton A."/>
            <person name="Pickard D."/>
            <person name="Kingsley R.A."/>
            <person name="Bignell A."/>
            <person name="Clark L."/>
            <person name="Harris B."/>
            <person name="Ormond D."/>
            <person name="Abdellah Z."/>
            <person name="Brooks K."/>
            <person name="Cherevach I."/>
            <person name="Chillingworth T."/>
            <person name="Woodward J."/>
            <person name="Norberczak H."/>
            <person name="Lord A."/>
            <person name="Arrowsmith C."/>
            <person name="Jagels K."/>
            <person name="Moule S."/>
            <person name="Mungall K."/>
            <person name="Saunders M."/>
            <person name="Whitehead S."/>
            <person name="Chabalgoity J.A."/>
            <person name="Maskell D."/>
            <person name="Humphreys T."/>
            <person name="Roberts M."/>
            <person name="Barrow P.A."/>
            <person name="Dougan G."/>
            <person name="Parkhill J."/>
        </authorList>
    </citation>
    <scope>NUCLEOTIDE SEQUENCE [LARGE SCALE GENOMIC DNA]</scope>
    <source>
        <strain>287/91 / NCTC 13346</strain>
    </source>
</reference>